<sequence>MKSAVILLPGLNRNRDMIAALTKITGQAPVTVWQTDTSIPDDVDLILIPGGFSYGDYLRCGAIAARMPVMQAVREKADKGVMVMGVCNGFQILLEAGLLPGALMRNASLKFVCREVKLEVTNANTSFTRGYKPGQIIRCPVAHHDGNYFADAETLKRLEGEGQVVFRYAEGTNPNGSVNDIAGIVNARGNVLGMMPHPENLIEAAHGGDDGRALFAGALGITA</sequence>
<reference key="1">
    <citation type="journal article" date="2002" name="Proc. Natl. Acad. Sci. U.S.A.">
        <title>The genome sequence of the facultative intracellular pathogen Brucella melitensis.</title>
        <authorList>
            <person name="DelVecchio V.G."/>
            <person name="Kapatral V."/>
            <person name="Redkar R.J."/>
            <person name="Patra G."/>
            <person name="Mujer C."/>
            <person name="Los T."/>
            <person name="Ivanova N."/>
            <person name="Anderson I."/>
            <person name="Bhattacharyya A."/>
            <person name="Lykidis A."/>
            <person name="Reznik G."/>
            <person name="Jablonski L."/>
            <person name="Larsen N."/>
            <person name="D'Souza M."/>
            <person name="Bernal A."/>
            <person name="Mazur M."/>
            <person name="Goltsman E."/>
            <person name="Selkov E."/>
            <person name="Elzer P.H."/>
            <person name="Hagius S."/>
            <person name="O'Callaghan D."/>
            <person name="Letesson J.-J."/>
            <person name="Haselkorn R."/>
            <person name="Kyrpides N.C."/>
            <person name="Overbeek R."/>
        </authorList>
    </citation>
    <scope>NUCLEOTIDE SEQUENCE [LARGE SCALE GENOMIC DNA]</scope>
    <source>
        <strain>ATCC 23456 / CCUG 17765 / NCTC 10094 / 16M</strain>
    </source>
</reference>
<evidence type="ECO:0000255" key="1">
    <source>
        <dbReference type="HAMAP-Rule" id="MF_00421"/>
    </source>
</evidence>
<evidence type="ECO:0000305" key="2"/>
<proteinExistence type="inferred from homology"/>
<dbReference type="EC" id="6.3.5.3" evidence="1"/>
<dbReference type="EC" id="3.5.1.2" evidence="1"/>
<dbReference type="EMBL" id="AE008917">
    <property type="protein sequence ID" value="AAL52305.1"/>
    <property type="status" value="ALT_INIT"/>
    <property type="molecule type" value="Genomic_DNA"/>
</dbReference>
<dbReference type="PIR" id="AF3392">
    <property type="entry name" value="AF3392"/>
</dbReference>
<dbReference type="RefSeq" id="WP_002963972.1">
    <property type="nucleotide sequence ID" value="NZ_GG703778.1"/>
</dbReference>
<dbReference type="SMR" id="Q8YGN4"/>
<dbReference type="GeneID" id="93016778"/>
<dbReference type="KEGG" id="bme:BMEI1124"/>
<dbReference type="KEGG" id="bmel:DK63_290"/>
<dbReference type="PATRIC" id="fig|224914.52.peg.299"/>
<dbReference type="eggNOG" id="COG0047">
    <property type="taxonomic scope" value="Bacteria"/>
</dbReference>
<dbReference type="PhylomeDB" id="Q8YGN4"/>
<dbReference type="UniPathway" id="UPA00074">
    <property type="reaction ID" value="UER00128"/>
</dbReference>
<dbReference type="Proteomes" id="UP000000419">
    <property type="component" value="Chromosome I"/>
</dbReference>
<dbReference type="GO" id="GO:0005737">
    <property type="term" value="C:cytoplasm"/>
    <property type="evidence" value="ECO:0007669"/>
    <property type="project" value="UniProtKB-SubCell"/>
</dbReference>
<dbReference type="GO" id="GO:0005524">
    <property type="term" value="F:ATP binding"/>
    <property type="evidence" value="ECO:0007669"/>
    <property type="project" value="UniProtKB-KW"/>
</dbReference>
<dbReference type="GO" id="GO:0004359">
    <property type="term" value="F:glutaminase activity"/>
    <property type="evidence" value="ECO:0007669"/>
    <property type="project" value="UniProtKB-EC"/>
</dbReference>
<dbReference type="GO" id="GO:0004642">
    <property type="term" value="F:phosphoribosylformylglycinamidine synthase activity"/>
    <property type="evidence" value="ECO:0007669"/>
    <property type="project" value="UniProtKB-UniRule"/>
</dbReference>
<dbReference type="GO" id="GO:0006189">
    <property type="term" value="P:'de novo' IMP biosynthetic process"/>
    <property type="evidence" value="ECO:0007669"/>
    <property type="project" value="UniProtKB-UniRule"/>
</dbReference>
<dbReference type="CDD" id="cd01740">
    <property type="entry name" value="GATase1_FGAR_AT"/>
    <property type="match status" value="1"/>
</dbReference>
<dbReference type="Gene3D" id="3.40.50.880">
    <property type="match status" value="1"/>
</dbReference>
<dbReference type="HAMAP" id="MF_00421">
    <property type="entry name" value="PurQ"/>
    <property type="match status" value="1"/>
</dbReference>
<dbReference type="InterPro" id="IPR029062">
    <property type="entry name" value="Class_I_gatase-like"/>
</dbReference>
<dbReference type="InterPro" id="IPR010075">
    <property type="entry name" value="PRibForGlyAmidine_synth_PurQ"/>
</dbReference>
<dbReference type="NCBIfam" id="TIGR01737">
    <property type="entry name" value="FGAM_synth_I"/>
    <property type="match status" value="1"/>
</dbReference>
<dbReference type="NCBIfam" id="NF002957">
    <property type="entry name" value="PRK03619.1"/>
    <property type="match status" value="1"/>
</dbReference>
<dbReference type="PANTHER" id="PTHR47552">
    <property type="entry name" value="PHOSPHORIBOSYLFORMYLGLYCINAMIDINE SYNTHASE SUBUNIT PURQ"/>
    <property type="match status" value="1"/>
</dbReference>
<dbReference type="PANTHER" id="PTHR47552:SF1">
    <property type="entry name" value="PHOSPHORIBOSYLFORMYLGLYCINAMIDINE SYNTHASE SUBUNIT PURQ"/>
    <property type="match status" value="1"/>
</dbReference>
<dbReference type="Pfam" id="PF13507">
    <property type="entry name" value="GATase_5"/>
    <property type="match status" value="1"/>
</dbReference>
<dbReference type="PIRSF" id="PIRSF001586">
    <property type="entry name" value="FGAM_synth_I"/>
    <property type="match status" value="1"/>
</dbReference>
<dbReference type="SMART" id="SM01211">
    <property type="entry name" value="GATase_5"/>
    <property type="match status" value="1"/>
</dbReference>
<dbReference type="SUPFAM" id="SSF52317">
    <property type="entry name" value="Class I glutamine amidotransferase-like"/>
    <property type="match status" value="1"/>
</dbReference>
<dbReference type="PROSITE" id="PS51273">
    <property type="entry name" value="GATASE_TYPE_1"/>
    <property type="match status" value="1"/>
</dbReference>
<comment type="function">
    <text evidence="1">Part of the phosphoribosylformylglycinamidine synthase complex involved in the purines biosynthetic pathway. Catalyzes the ATP-dependent conversion of formylglycinamide ribonucleotide (FGAR) and glutamine to yield formylglycinamidine ribonucleotide (FGAM) and glutamate. The FGAM synthase complex is composed of three subunits. PurQ produces an ammonia molecule by converting glutamine to glutamate. PurL transfers the ammonia molecule to FGAR to form FGAM in an ATP-dependent manner. PurS interacts with PurQ and PurL and is thought to assist in the transfer of the ammonia molecule from PurQ to PurL.</text>
</comment>
<comment type="catalytic activity">
    <reaction evidence="1">
        <text>N(2)-formyl-N(1)-(5-phospho-beta-D-ribosyl)glycinamide + L-glutamine + ATP + H2O = 2-formamido-N(1)-(5-O-phospho-beta-D-ribosyl)acetamidine + L-glutamate + ADP + phosphate + H(+)</text>
        <dbReference type="Rhea" id="RHEA:17129"/>
        <dbReference type="ChEBI" id="CHEBI:15377"/>
        <dbReference type="ChEBI" id="CHEBI:15378"/>
        <dbReference type="ChEBI" id="CHEBI:29985"/>
        <dbReference type="ChEBI" id="CHEBI:30616"/>
        <dbReference type="ChEBI" id="CHEBI:43474"/>
        <dbReference type="ChEBI" id="CHEBI:58359"/>
        <dbReference type="ChEBI" id="CHEBI:147286"/>
        <dbReference type="ChEBI" id="CHEBI:147287"/>
        <dbReference type="ChEBI" id="CHEBI:456216"/>
        <dbReference type="EC" id="6.3.5.3"/>
    </reaction>
</comment>
<comment type="catalytic activity">
    <reaction evidence="1">
        <text>L-glutamine + H2O = L-glutamate + NH4(+)</text>
        <dbReference type="Rhea" id="RHEA:15889"/>
        <dbReference type="ChEBI" id="CHEBI:15377"/>
        <dbReference type="ChEBI" id="CHEBI:28938"/>
        <dbReference type="ChEBI" id="CHEBI:29985"/>
        <dbReference type="ChEBI" id="CHEBI:58359"/>
        <dbReference type="EC" id="3.5.1.2"/>
    </reaction>
</comment>
<comment type="pathway">
    <text evidence="1">Purine metabolism; IMP biosynthesis via de novo pathway; 5-amino-1-(5-phospho-D-ribosyl)imidazole from N(2)-formyl-N(1)-(5-phospho-D-ribosyl)glycinamide: step 1/2.</text>
</comment>
<comment type="subunit">
    <text evidence="1">Part of the FGAM synthase complex composed of 1 PurL, 1 PurQ and 2 PurS subunits.</text>
</comment>
<comment type="subcellular location">
    <subcellularLocation>
        <location evidence="1">Cytoplasm</location>
    </subcellularLocation>
</comment>
<comment type="sequence caution" evidence="2">
    <conflict type="erroneous initiation">
        <sequence resource="EMBL-CDS" id="AAL52305"/>
    </conflict>
    <text>Extended N-terminus.</text>
</comment>
<name>PURQ_BRUME</name>
<feature type="chain" id="PRO_0000100544" description="Phosphoribosylformylglycinamidine synthase subunit PurQ">
    <location>
        <begin position="1"/>
        <end position="223"/>
    </location>
</feature>
<feature type="domain" description="Glutamine amidotransferase type-1" evidence="1">
    <location>
        <begin position="3"/>
        <end position="223"/>
    </location>
</feature>
<feature type="active site" description="Nucleophile" evidence="1">
    <location>
        <position position="87"/>
    </location>
</feature>
<feature type="active site" evidence="1">
    <location>
        <position position="197"/>
    </location>
</feature>
<feature type="active site" evidence="1">
    <location>
        <position position="199"/>
    </location>
</feature>
<organism>
    <name type="scientific">Brucella melitensis biotype 1 (strain ATCC 23456 / CCUG 17765 / NCTC 10094 / 16M)</name>
    <dbReference type="NCBI Taxonomy" id="224914"/>
    <lineage>
        <taxon>Bacteria</taxon>
        <taxon>Pseudomonadati</taxon>
        <taxon>Pseudomonadota</taxon>
        <taxon>Alphaproteobacteria</taxon>
        <taxon>Hyphomicrobiales</taxon>
        <taxon>Brucellaceae</taxon>
        <taxon>Brucella/Ochrobactrum group</taxon>
        <taxon>Brucella</taxon>
    </lineage>
</organism>
<accession>Q8YGN4</accession>
<gene>
    <name evidence="1" type="primary">purQ</name>
    <name type="ordered locus">BMEI1124</name>
</gene>
<protein>
    <recommendedName>
        <fullName evidence="1">Phosphoribosylformylglycinamidine synthase subunit PurQ</fullName>
        <shortName evidence="1">FGAM synthase</shortName>
        <ecNumber evidence="1">6.3.5.3</ecNumber>
    </recommendedName>
    <alternativeName>
        <fullName evidence="1">Formylglycinamide ribonucleotide amidotransferase subunit I</fullName>
        <shortName evidence="1">FGAR amidotransferase I</shortName>
        <shortName evidence="1">FGAR-AT I</shortName>
    </alternativeName>
    <alternativeName>
        <fullName evidence="1">Glutaminase PurQ</fullName>
        <ecNumber evidence="1">3.5.1.2</ecNumber>
    </alternativeName>
    <alternativeName>
        <fullName evidence="1">Phosphoribosylformylglycinamidine synthase subunit I</fullName>
    </alternativeName>
</protein>
<keyword id="KW-0067">ATP-binding</keyword>
<keyword id="KW-0963">Cytoplasm</keyword>
<keyword id="KW-0315">Glutamine amidotransferase</keyword>
<keyword id="KW-0378">Hydrolase</keyword>
<keyword id="KW-0436">Ligase</keyword>
<keyword id="KW-0547">Nucleotide-binding</keyword>
<keyword id="KW-0658">Purine biosynthesis</keyword>